<feature type="chain" id="PRO_0000455317" description="Type 1 encapsulin shell protein">
    <location>
        <begin position="1"/>
        <end position="264"/>
    </location>
</feature>
<gene>
    <name evidence="4" type="primary">enc</name>
    <name type="ordered locus">RER_59900</name>
</gene>
<proteinExistence type="evidence at protein level"/>
<protein>
    <recommendedName>
        <fullName evidence="3">Type 1 encapsulin shell protein</fullName>
    </recommendedName>
</protein>
<organism>
    <name type="scientific">Rhodococcus erythropolis (strain PR4 / NBRC 100887)</name>
    <dbReference type="NCBI Taxonomy" id="234621"/>
    <lineage>
        <taxon>Bacteria</taxon>
        <taxon>Bacillati</taxon>
        <taxon>Actinomycetota</taxon>
        <taxon>Actinomycetes</taxon>
        <taxon>Mycobacteriales</taxon>
        <taxon>Nocardiaceae</taxon>
        <taxon>Rhodococcus</taxon>
        <taxon>Rhodococcus erythropolis group</taxon>
    </lineage>
</organism>
<keyword id="KW-1284">Encapsulin nanocompartment</keyword>
<evidence type="ECO:0000250" key="1">
    <source>
        <dbReference type="UniProtKB" id="Q9WZP2"/>
    </source>
</evidence>
<evidence type="ECO:0000269" key="2">
    <source>
    </source>
</evidence>
<evidence type="ECO:0000303" key="3">
    <source>
    </source>
</evidence>
<evidence type="ECO:0000305" key="4"/>
<evidence type="ECO:0000305" key="5">
    <source>
    </source>
</evidence>
<name>ENCAP_RHOE4</name>
<dbReference type="EMBL" id="AP008957">
    <property type="protein sequence ID" value="BAH36698.1"/>
    <property type="molecule type" value="Genomic_DNA"/>
</dbReference>
<dbReference type="RefSeq" id="WP_020909834.1">
    <property type="nucleotide sequence ID" value="NC_012490.1"/>
</dbReference>
<dbReference type="SMR" id="C0ZVK4"/>
<dbReference type="MEROPS" id="U56.001"/>
<dbReference type="KEGG" id="rer:RER_59900"/>
<dbReference type="PATRIC" id="fig|234621.6.peg.6580"/>
<dbReference type="eggNOG" id="COG1659">
    <property type="taxonomic scope" value="Bacteria"/>
</dbReference>
<dbReference type="HOGENOM" id="CLU_089875_1_0_11"/>
<dbReference type="Proteomes" id="UP000002204">
    <property type="component" value="Chromosome"/>
</dbReference>
<dbReference type="GO" id="GO:0140737">
    <property type="term" value="C:encapsulin nanocompartment"/>
    <property type="evidence" value="ECO:0000314"/>
    <property type="project" value="UniProtKB"/>
</dbReference>
<dbReference type="Gene3D" id="3.30.2400.30">
    <property type="match status" value="1"/>
</dbReference>
<dbReference type="Gene3D" id="3.30.2320.10">
    <property type="entry name" value="hypothetical protein PF0899 domain"/>
    <property type="match status" value="1"/>
</dbReference>
<dbReference type="InterPro" id="IPR007544">
    <property type="entry name" value="ENCAP"/>
</dbReference>
<dbReference type="InterPro" id="IPR051429">
    <property type="entry name" value="Encapsulin_nc"/>
</dbReference>
<dbReference type="NCBIfam" id="NF041155">
    <property type="entry name" value="encap_f1"/>
    <property type="match status" value="1"/>
</dbReference>
<dbReference type="PANTHER" id="PTHR37165">
    <property type="entry name" value="PEPTIDASE U56 FAMILY"/>
    <property type="match status" value="1"/>
</dbReference>
<dbReference type="PANTHER" id="PTHR37165:SF1">
    <property type="entry name" value="TYPE 1 ENCAPSULIN SHELL PROTEIN"/>
    <property type="match status" value="1"/>
</dbReference>
<dbReference type="Pfam" id="PF04454">
    <property type="entry name" value="Linocin_M18"/>
    <property type="match status" value="1"/>
</dbReference>
<dbReference type="PIRSF" id="PIRSF019254">
    <property type="entry name" value="CFP29"/>
    <property type="match status" value="1"/>
</dbReference>
<comment type="function">
    <text evidence="2">Shell component of a type 1 encapsulin nanocompartment. Assembles into proteinaceous shells 21-24 nm in diameter. Empty organelles can be expressed in E.coli. Cargo proteins (DypB) are targeted to the interior via their C-terminal extensions.</text>
</comment>
<comment type="biophysicochemical properties">
    <temperatureDependence>
        <text evidence="2">Stable as a monodisperse organelle up to 50 degrees Celsius, at higher temperatures they aggregate.</text>
    </temperatureDependence>
</comment>
<comment type="subunit">
    <text evidence="1 5">Forms hollow shells composed of 60 subunits (Probable). Monomers probably form pentamers which assemble into the shell. There are 12 pores where the pentamers meet as well as 3-fold axis channels and dimer channels; none are larger than 3-4 Angstroms in diameter. The N-terminus of the protein is inside the shell, the C-terminus is outside (By similarity).</text>
</comment>
<comment type="subcellular location">
    <subcellularLocation>
        <location evidence="2">Encapsulin nanocompartment</location>
    </subcellularLocation>
</comment>
<comment type="biotechnology">
    <text evidence="2">Foreign proteins can be targeted to ectopic nanocompartments in E.coli upon coexpression with a construct using the 38 C-terminal residues of DypB (AC C0ZVK5), tested with GFP and luciferase. Probably only one molecule of each foreign protein is inside the nanocompartment due to its small interior space.</text>
</comment>
<comment type="similarity">
    <text evidence="4">Belongs to the encapsulin family. Family 1 subfamily.</text>
</comment>
<reference key="1">
    <citation type="submission" date="2005-03" db="EMBL/GenBank/DDBJ databases">
        <title>Comparison of the complete genome sequences of Rhodococcus erythropolis PR4 and Rhodococcus opacus B4.</title>
        <authorList>
            <person name="Takarada H."/>
            <person name="Sekine M."/>
            <person name="Hosoyama A."/>
            <person name="Yamada R."/>
            <person name="Fujisawa T."/>
            <person name="Omata S."/>
            <person name="Shimizu A."/>
            <person name="Tsukatani N."/>
            <person name="Tanikawa S."/>
            <person name="Fujita N."/>
            <person name="Harayama S."/>
        </authorList>
    </citation>
    <scope>NUCLEOTIDE SEQUENCE [LARGE SCALE GENOMIC DNA]</scope>
    <source>
        <strain>PR4 / NBRC 100887</strain>
    </source>
</reference>
<reference key="2">
    <citation type="journal article" date="2015" name="Biotechnol. Bioeng.">
        <title>Packaging guest proteins into the encapsulin nanocompartment from Rhodococcus erythropolis N771.</title>
        <authorList>
            <person name="Tamura A."/>
            <person name="Fukutani Y."/>
            <person name="Takami T."/>
            <person name="Fujii M."/>
            <person name="Nakaguchi Y."/>
            <person name="Murakami Y."/>
            <person name="Noguchi K."/>
            <person name="Yohda M."/>
            <person name="Odaka M."/>
        </authorList>
    </citation>
    <scope>FUNCTION</scope>
    <scope>BIOPHYSICOCHEMICAL PROPERTIES</scope>
    <scope>SUBUNIT</scope>
    <scope>SUBCELLULAR LOCATION</scope>
    <scope>BIOTECHNOLOGY</scope>
    <source>
        <strain>N771</strain>
    </source>
</reference>
<reference key="3">
    <citation type="journal article" date="2021" name="Nat. Commun.">
        <title>Large-scale computational discovery and analysis of virus-derived microbial nanocompartments.</title>
        <authorList>
            <person name="Andreas M.P."/>
            <person name="Giessen T.W."/>
        </authorList>
    </citation>
    <scope>CLASSIFICATION</scope>
</reference>
<accession>C0ZVK4</accession>
<sequence length="264" mass="28671">MTNLHRDLAPISAAAWAEIEEEASRTFKRHVAGRRVVDVEGPSGDDLAAIPLGHQVPINPLADGVIAHARQSQPVIELRVPFTVSRQAIDDVERGAKDSDWQPVKDAAKQIAFAEDRAIFEGYPAASITGVRASGSNPELKLPIDAKDYPEAISQAITSLRLAGVNGPYSLLLNADAFTAINETSDHGYPIREHLRRVLDGEIIWAPAIDGAFLLSTRGGDYELHLGQDLSIGYLSHDANSVELYFQESMTFLMYTSEAVVSLA</sequence>